<organism>
    <name type="scientific">Geobacillus sp. (strain WCH70)</name>
    <dbReference type="NCBI Taxonomy" id="471223"/>
    <lineage>
        <taxon>Bacteria</taxon>
        <taxon>Bacillati</taxon>
        <taxon>Bacillota</taxon>
        <taxon>Bacilli</taxon>
        <taxon>Bacillales</taxon>
        <taxon>Anoxybacillaceae</taxon>
        <taxon>Geobacillus</taxon>
    </lineage>
</organism>
<proteinExistence type="inferred from homology"/>
<sequence>MGREFLGLFEEWADSYDQSVEGYDEEYREVFANYEDILNTVASKAGSVVLEFGVGTGNLTKKLLEQGKTVYGIEPSEPMRKKAREKLGDKVLIVDGDFLQFPLPPKPIDTIVSTYAFHHLTDEEKGEAIAKYSQLLKKGDKIVFADTAFRDRQAFQRAIEEARERGFHHLADDLGREYYTTLDVLTKLFKENGFTVTFTQKNAFVWVMEAVKQ</sequence>
<gene>
    <name type="ordered locus">GWCH70_2477</name>
</gene>
<evidence type="ECO:0000255" key="1">
    <source>
        <dbReference type="HAMAP-Rule" id="MF_02100"/>
    </source>
</evidence>
<name>Y2477_GEOSW</name>
<reference key="1">
    <citation type="submission" date="2009-06" db="EMBL/GenBank/DDBJ databases">
        <title>Complete sequence of chromosome of Geopacillus sp. WCH70.</title>
        <authorList>
            <consortium name="US DOE Joint Genome Institute"/>
            <person name="Lucas S."/>
            <person name="Copeland A."/>
            <person name="Lapidus A."/>
            <person name="Glavina del Rio T."/>
            <person name="Dalin E."/>
            <person name="Tice H."/>
            <person name="Bruce D."/>
            <person name="Goodwin L."/>
            <person name="Pitluck S."/>
            <person name="Chertkov O."/>
            <person name="Brettin T."/>
            <person name="Detter J.C."/>
            <person name="Han C."/>
            <person name="Larimer F."/>
            <person name="Land M."/>
            <person name="Hauser L."/>
            <person name="Kyrpides N."/>
            <person name="Mikhailova N."/>
            <person name="Brumm P."/>
            <person name="Mead D.A."/>
            <person name="Richardson P."/>
        </authorList>
    </citation>
    <scope>NUCLEOTIDE SEQUENCE [LARGE SCALE GENOMIC DNA]</scope>
    <source>
        <strain>WCH70</strain>
    </source>
</reference>
<accession>C5D4Y0</accession>
<protein>
    <recommendedName>
        <fullName evidence="1">Uncharacterized methyltransferase GWCH70_2477</fullName>
        <ecNumber evidence="1">2.1.1.-</ecNumber>
    </recommendedName>
</protein>
<comment type="function">
    <text evidence="1">Could be a S-adenosyl-L-methionine-dependent methyltransferase.</text>
</comment>
<comment type="similarity">
    <text evidence="1">Belongs to the methyltransferase superfamily. YrrT family.</text>
</comment>
<feature type="chain" id="PRO_1000216418" description="Uncharacterized methyltransferase GWCH70_2477">
    <location>
        <begin position="1"/>
        <end position="213"/>
    </location>
</feature>
<feature type="binding site" evidence="1">
    <location>
        <position position="53"/>
    </location>
    <ligand>
        <name>S-adenosyl-L-methionine</name>
        <dbReference type="ChEBI" id="CHEBI:59789"/>
    </ligand>
</feature>
<feature type="binding site" evidence="1">
    <location>
        <position position="74"/>
    </location>
    <ligand>
        <name>S-adenosyl-L-methionine</name>
        <dbReference type="ChEBI" id="CHEBI:59789"/>
    </ligand>
</feature>
<feature type="binding site" evidence="1">
    <location>
        <position position="97"/>
    </location>
    <ligand>
        <name>S-adenosyl-L-methionine</name>
        <dbReference type="ChEBI" id="CHEBI:59789"/>
    </ligand>
</feature>
<dbReference type="EC" id="2.1.1.-" evidence="1"/>
<dbReference type="EMBL" id="CP001638">
    <property type="protein sequence ID" value="ACS25172.1"/>
    <property type="molecule type" value="Genomic_DNA"/>
</dbReference>
<dbReference type="SMR" id="C5D4Y0"/>
<dbReference type="STRING" id="471223.GWCH70_2477"/>
<dbReference type="KEGG" id="gwc:GWCH70_2477"/>
<dbReference type="eggNOG" id="COG2226">
    <property type="taxonomic scope" value="Bacteria"/>
</dbReference>
<dbReference type="HOGENOM" id="CLU_111961_0_0_9"/>
<dbReference type="OrthoDB" id="465705at2"/>
<dbReference type="GO" id="GO:0000179">
    <property type="term" value="F:rRNA (adenine-N6,N6-)-dimethyltransferase activity"/>
    <property type="evidence" value="ECO:0007669"/>
    <property type="project" value="InterPro"/>
</dbReference>
<dbReference type="CDD" id="cd02440">
    <property type="entry name" value="AdoMet_MTases"/>
    <property type="match status" value="1"/>
</dbReference>
<dbReference type="Gene3D" id="3.40.50.150">
    <property type="entry name" value="Vaccinia Virus protein VP39"/>
    <property type="match status" value="1"/>
</dbReference>
<dbReference type="HAMAP" id="MF_02100">
    <property type="entry name" value="Methyltr_YrrT"/>
    <property type="match status" value="1"/>
</dbReference>
<dbReference type="InterPro" id="IPR041698">
    <property type="entry name" value="Methyltransf_25"/>
</dbReference>
<dbReference type="InterPro" id="IPR020598">
    <property type="entry name" value="rRNA_Ade_methylase_Trfase_N"/>
</dbReference>
<dbReference type="InterPro" id="IPR029063">
    <property type="entry name" value="SAM-dependent_MTases_sf"/>
</dbReference>
<dbReference type="InterPro" id="IPR023553">
    <property type="entry name" value="Uncharacterised_MeTfrase_YrrT"/>
</dbReference>
<dbReference type="PANTHER" id="PTHR43861:SF1">
    <property type="entry name" value="TRANS-ACONITATE 2-METHYLTRANSFERASE"/>
    <property type="match status" value="1"/>
</dbReference>
<dbReference type="PANTHER" id="PTHR43861">
    <property type="entry name" value="TRANS-ACONITATE 2-METHYLTRANSFERASE-RELATED"/>
    <property type="match status" value="1"/>
</dbReference>
<dbReference type="Pfam" id="PF13649">
    <property type="entry name" value="Methyltransf_25"/>
    <property type="match status" value="1"/>
</dbReference>
<dbReference type="SMART" id="SM00650">
    <property type="entry name" value="rADc"/>
    <property type="match status" value="1"/>
</dbReference>
<dbReference type="SUPFAM" id="SSF53335">
    <property type="entry name" value="S-adenosyl-L-methionine-dependent methyltransferases"/>
    <property type="match status" value="1"/>
</dbReference>
<keyword id="KW-0489">Methyltransferase</keyword>
<keyword id="KW-0949">S-adenosyl-L-methionine</keyword>
<keyword id="KW-0808">Transferase</keyword>